<accession>A4STF8</accession>
<comment type="function">
    <text evidence="1">Sulfur carrier protein which probably makes part of a sulfur-relay system.</text>
</comment>
<comment type="subcellular location">
    <subcellularLocation>
        <location evidence="1">Cytoplasm</location>
    </subcellularLocation>
</comment>
<comment type="similarity">
    <text evidence="1">Belongs to the sulfur carrier protein TusA family.</text>
</comment>
<feature type="chain" id="PRO_1000050009" description="Sulfur carrier protein TusA">
    <location>
        <begin position="1"/>
        <end position="81"/>
    </location>
</feature>
<feature type="active site" description="Cysteine persulfide intermediate" evidence="1">
    <location>
        <position position="19"/>
    </location>
</feature>
<proteinExistence type="inferred from homology"/>
<dbReference type="EMBL" id="CP000644">
    <property type="protein sequence ID" value="ABO92180.1"/>
    <property type="molecule type" value="Genomic_DNA"/>
</dbReference>
<dbReference type="RefSeq" id="WP_005320582.1">
    <property type="nucleotide sequence ID" value="NC_009348.1"/>
</dbReference>
<dbReference type="SMR" id="A4STF8"/>
<dbReference type="STRING" id="29491.GCA_000820065_02840"/>
<dbReference type="KEGG" id="asa:ASA_4256"/>
<dbReference type="eggNOG" id="COG0425">
    <property type="taxonomic scope" value="Bacteria"/>
</dbReference>
<dbReference type="HOGENOM" id="CLU_165255_5_0_6"/>
<dbReference type="Proteomes" id="UP000000225">
    <property type="component" value="Chromosome"/>
</dbReference>
<dbReference type="GO" id="GO:0005737">
    <property type="term" value="C:cytoplasm"/>
    <property type="evidence" value="ECO:0007669"/>
    <property type="project" value="UniProtKB-SubCell"/>
</dbReference>
<dbReference type="GO" id="GO:0097163">
    <property type="term" value="F:sulfur carrier activity"/>
    <property type="evidence" value="ECO:0007669"/>
    <property type="project" value="UniProtKB-UniRule"/>
</dbReference>
<dbReference type="GO" id="GO:0002143">
    <property type="term" value="P:tRNA wobble position uridine thiolation"/>
    <property type="evidence" value="ECO:0007669"/>
    <property type="project" value="InterPro"/>
</dbReference>
<dbReference type="CDD" id="cd03423">
    <property type="entry name" value="SirA"/>
    <property type="match status" value="1"/>
</dbReference>
<dbReference type="Gene3D" id="3.30.110.40">
    <property type="entry name" value="TusA-like domain"/>
    <property type="match status" value="1"/>
</dbReference>
<dbReference type="HAMAP" id="MF_00413">
    <property type="entry name" value="Thiourid_synth_A"/>
    <property type="match status" value="1"/>
</dbReference>
<dbReference type="InterPro" id="IPR022931">
    <property type="entry name" value="Sulphur_carrier_TusA"/>
</dbReference>
<dbReference type="InterPro" id="IPR001455">
    <property type="entry name" value="TusA-like"/>
</dbReference>
<dbReference type="InterPro" id="IPR036868">
    <property type="entry name" value="TusA-like_sf"/>
</dbReference>
<dbReference type="NCBIfam" id="NF001423">
    <property type="entry name" value="PRK00299.1"/>
    <property type="match status" value="1"/>
</dbReference>
<dbReference type="PANTHER" id="PTHR33279:SF2">
    <property type="entry name" value="SULFUR CARRIER PROTEIN TUSA"/>
    <property type="match status" value="1"/>
</dbReference>
<dbReference type="PANTHER" id="PTHR33279">
    <property type="entry name" value="SULFUR CARRIER PROTEIN YEDF-RELATED"/>
    <property type="match status" value="1"/>
</dbReference>
<dbReference type="Pfam" id="PF01206">
    <property type="entry name" value="TusA"/>
    <property type="match status" value="1"/>
</dbReference>
<dbReference type="SUPFAM" id="SSF64307">
    <property type="entry name" value="SirA-like"/>
    <property type="match status" value="1"/>
</dbReference>
<dbReference type="PROSITE" id="PS01148">
    <property type="entry name" value="UPF0033"/>
    <property type="match status" value="1"/>
</dbReference>
<reference key="1">
    <citation type="journal article" date="2008" name="BMC Genomics">
        <title>The genome of Aeromonas salmonicida subsp. salmonicida A449: insights into the evolution of a fish pathogen.</title>
        <authorList>
            <person name="Reith M.E."/>
            <person name="Singh R.K."/>
            <person name="Curtis B."/>
            <person name="Boyd J.M."/>
            <person name="Bouevitch A."/>
            <person name="Kimball J."/>
            <person name="Munholland J."/>
            <person name="Murphy C."/>
            <person name="Sarty D."/>
            <person name="Williams J."/>
            <person name="Nash J.H."/>
            <person name="Johnson S.C."/>
            <person name="Brown L.L."/>
        </authorList>
    </citation>
    <scope>NUCLEOTIDE SEQUENCE [LARGE SCALE GENOMIC DNA]</scope>
    <source>
        <strain>A449</strain>
    </source>
</reference>
<protein>
    <recommendedName>
        <fullName evidence="1">Sulfur carrier protein TusA</fullName>
    </recommendedName>
</protein>
<name>TUSA_AERS4</name>
<evidence type="ECO:0000255" key="1">
    <source>
        <dbReference type="HAMAP-Rule" id="MF_00413"/>
    </source>
</evidence>
<keyword id="KW-0963">Cytoplasm</keyword>
<sequence>MSALFCDATHELDAIGLRCPEPVMMVRKKVRLMAQGETLLVSADDPSTTRDIPSFCRFMDHTLVASETEQAPYRYLIRKGQ</sequence>
<gene>
    <name evidence="1" type="primary">tusA</name>
    <name type="ordered locus">ASA_4256</name>
</gene>
<organism>
    <name type="scientific">Aeromonas salmonicida (strain A449)</name>
    <dbReference type="NCBI Taxonomy" id="382245"/>
    <lineage>
        <taxon>Bacteria</taxon>
        <taxon>Pseudomonadati</taxon>
        <taxon>Pseudomonadota</taxon>
        <taxon>Gammaproteobacteria</taxon>
        <taxon>Aeromonadales</taxon>
        <taxon>Aeromonadaceae</taxon>
        <taxon>Aeromonas</taxon>
    </lineage>
</organism>